<accession>P16042</accession>
<accession>Q91174</accession>
<dbReference type="EMBL" id="X17328">
    <property type="protein sequence ID" value="CAA35206.1"/>
    <property type="molecule type" value="mRNA"/>
</dbReference>
<dbReference type="EMBL" id="D10943">
    <property type="protein sequence ID" value="BAA01737.1"/>
    <property type="status" value="ALT_SEQ"/>
    <property type="molecule type" value="mRNA"/>
</dbReference>
<dbReference type="PIR" id="B34132">
    <property type="entry name" value="B34132"/>
</dbReference>
<dbReference type="SMR" id="P16042"/>
<dbReference type="GO" id="GO:0005615">
    <property type="term" value="C:extracellular space"/>
    <property type="evidence" value="ECO:0007669"/>
    <property type="project" value="TreeGrafter"/>
</dbReference>
<dbReference type="GO" id="GO:0030141">
    <property type="term" value="C:secretory granule"/>
    <property type="evidence" value="ECO:0007669"/>
    <property type="project" value="TreeGrafter"/>
</dbReference>
<dbReference type="GO" id="GO:0005185">
    <property type="term" value="F:neurohypophyseal hormone activity"/>
    <property type="evidence" value="ECO:0007669"/>
    <property type="project" value="InterPro"/>
</dbReference>
<dbReference type="FunFam" id="2.60.9.10:FF:000001">
    <property type="entry name" value="oxytocin-neurophysin 1"/>
    <property type="match status" value="1"/>
</dbReference>
<dbReference type="Gene3D" id="2.60.9.10">
    <property type="entry name" value="Neurohypophysial hormone domain"/>
    <property type="match status" value="1"/>
</dbReference>
<dbReference type="InterPro" id="IPR000981">
    <property type="entry name" value="Neurhyp_horm"/>
</dbReference>
<dbReference type="InterPro" id="IPR036387">
    <property type="entry name" value="Neurhyp_horm_dom_sf"/>
</dbReference>
<dbReference type="InterPro" id="IPR022423">
    <property type="entry name" value="Neurohypophysial_hormone_CS"/>
</dbReference>
<dbReference type="PANTHER" id="PTHR11681">
    <property type="entry name" value="NEUROPHYSIN"/>
    <property type="match status" value="1"/>
</dbReference>
<dbReference type="PANTHER" id="PTHR11681:SF13">
    <property type="entry name" value="VASOPRESSIN-NEUROPHYSIN 2-COPEPTIN PRECURSOR"/>
    <property type="match status" value="1"/>
</dbReference>
<dbReference type="Pfam" id="PF00220">
    <property type="entry name" value="Hormone_4"/>
    <property type="match status" value="1"/>
</dbReference>
<dbReference type="Pfam" id="PF00184">
    <property type="entry name" value="Hormone_5"/>
    <property type="match status" value="1"/>
</dbReference>
<dbReference type="PIRSF" id="PIRSF001815">
    <property type="entry name" value="Nonapeptide_hormone_precursor"/>
    <property type="match status" value="1"/>
</dbReference>
<dbReference type="PRINTS" id="PR00831">
    <property type="entry name" value="NEUROPHYSIN"/>
</dbReference>
<dbReference type="SMART" id="SM00003">
    <property type="entry name" value="NH"/>
    <property type="match status" value="1"/>
</dbReference>
<dbReference type="SUPFAM" id="SSF49606">
    <property type="entry name" value="Neurophysin II"/>
    <property type="match status" value="1"/>
</dbReference>
<dbReference type="PROSITE" id="PS00264">
    <property type="entry name" value="NEUROHYPOPHYS_HORM"/>
    <property type="match status" value="1"/>
</dbReference>
<name>NEU4_ONCKE</name>
<reference key="1">
    <citation type="journal article" date="1990" name="FEBS Lett.">
        <title>Molecular cloning of two distinct vasotocin precursor cDNAs from chum salmon (Oncorhynchus keta) suggests an ancient gene duplication.</title>
        <authorList>
            <person name="Heierhorst J."/>
            <person name="Mahlmann S."/>
            <person name="Morley S.D."/>
            <person name="Coe I.R."/>
            <person name="Sherwood N.M."/>
            <person name="Richter D."/>
        </authorList>
    </citation>
    <scope>NUCLEOTIDE SEQUENCE [MRNA]</scope>
    <source>
        <tissue>Brain</tissue>
    </source>
</reference>
<reference key="2">
    <citation type="journal article" date="1991" name="J. Comp. Physiol. B">
        <title>Cloning and sequence analyses of cDNAs encoding vasotocin and isotocin precursors of chum salmon, Oncorhynchus keta: evolutionary relationships of neurohypophysial hormone precursors.</title>
        <authorList>
            <person name="Hyodo S."/>
            <person name="Kato Y."/>
            <person name="Ono M."/>
            <person name="Urano A."/>
        </authorList>
    </citation>
    <scope>NUCLEOTIDE SEQUENCE [MRNA]</scope>
    <source>
        <strain>Tsugaruishi</strain>
        <tissue>Brain</tissue>
    </source>
</reference>
<proteinExistence type="evidence at transcript level"/>
<evidence type="ECO:0000250" key="1"/>
<evidence type="ECO:0000250" key="2">
    <source>
        <dbReference type="UniProtKB" id="P01175"/>
    </source>
</evidence>
<evidence type="ECO:0000305" key="3"/>
<keyword id="KW-0027">Amidation</keyword>
<keyword id="KW-0165">Cleavage on pair of basic residues</keyword>
<keyword id="KW-1015">Disulfide bond</keyword>
<keyword id="KW-0372">Hormone</keyword>
<keyword id="KW-0964">Secreted</keyword>
<keyword id="KW-0732">Signal</keyword>
<sequence>MPHSTLLLCVIGLLAFSSACYIQNCPRGGKRALQDTGIRQCMTCGPGDQGHCFGPSICCGEGLGCWMGSPETARCFEENYLPTPCQTGGRPCGSDAGRCAAPGVCCDSESCVLDPDCLSESRYHSPADHSAGATSDSPGELLLRLLHFATRGQSEYKQ</sequence>
<organism>
    <name type="scientific">Oncorhynchus keta</name>
    <name type="common">Chum salmon</name>
    <name type="synonym">Salmo keta</name>
    <dbReference type="NCBI Taxonomy" id="8018"/>
    <lineage>
        <taxon>Eukaryota</taxon>
        <taxon>Metazoa</taxon>
        <taxon>Chordata</taxon>
        <taxon>Craniata</taxon>
        <taxon>Vertebrata</taxon>
        <taxon>Euteleostomi</taxon>
        <taxon>Actinopterygii</taxon>
        <taxon>Neopterygii</taxon>
        <taxon>Teleostei</taxon>
        <taxon>Protacanthopterygii</taxon>
        <taxon>Salmoniformes</taxon>
        <taxon>Salmonidae</taxon>
        <taxon>Salmoninae</taxon>
        <taxon>Oncorhynchus</taxon>
    </lineage>
</organism>
<comment type="function">
    <text>Vasotocin is an antidiuretic hormone.</text>
</comment>
<comment type="subcellular location">
    <subcellularLocation>
        <location>Secreted</location>
    </subcellularLocation>
</comment>
<comment type="PTM">
    <text evidence="1">Seven disulfide bonds are present in neurophysin.</text>
</comment>
<comment type="similarity">
    <text evidence="3">Belongs to the vasopressin/oxytocin family.</text>
</comment>
<protein>
    <recommendedName>
        <fullName>Vasotocin-neurophysin VT 2</fullName>
    </recommendedName>
    <component>
        <recommendedName>
            <fullName>Vasotocin</fullName>
            <shortName>VT</shortName>
        </recommendedName>
    </component>
    <component>
        <recommendedName>
            <fullName>Neurophysin VT 2</fullName>
        </recommendedName>
    </component>
</protein>
<feature type="signal peptide">
    <location>
        <begin position="1"/>
        <end position="19"/>
    </location>
</feature>
<feature type="peptide" id="PRO_0000020568" description="Vasotocin">
    <location>
        <begin position="20"/>
        <end position="28"/>
    </location>
</feature>
<feature type="chain" id="PRO_0000020569" description="Neurophysin VT 2">
    <location>
        <begin position="32"/>
        <end position="158"/>
    </location>
</feature>
<feature type="modified residue" description="Glycine amide" evidence="1">
    <location>
        <position position="28"/>
    </location>
</feature>
<feature type="disulfide bond" evidence="2">
    <location>
        <begin position="20"/>
        <end position="25"/>
    </location>
</feature>
<feature type="disulfide bond" evidence="2">
    <location>
        <begin position="41"/>
        <end position="85"/>
    </location>
</feature>
<feature type="disulfide bond" evidence="2">
    <location>
        <begin position="44"/>
        <end position="58"/>
    </location>
</feature>
<feature type="disulfide bond" evidence="2">
    <location>
        <begin position="52"/>
        <end position="75"/>
    </location>
</feature>
<feature type="disulfide bond" evidence="2">
    <location>
        <begin position="59"/>
        <end position="65"/>
    </location>
</feature>
<feature type="disulfide bond" evidence="2">
    <location>
        <begin position="92"/>
        <end position="105"/>
    </location>
</feature>
<feature type="disulfide bond" evidence="2">
    <location>
        <begin position="99"/>
        <end position="117"/>
    </location>
</feature>
<feature type="disulfide bond" evidence="2">
    <location>
        <begin position="106"/>
        <end position="111"/>
    </location>
</feature>